<organism>
    <name type="scientific">Burkholderia orbicola (strain MC0-3)</name>
    <dbReference type="NCBI Taxonomy" id="406425"/>
    <lineage>
        <taxon>Bacteria</taxon>
        <taxon>Pseudomonadati</taxon>
        <taxon>Pseudomonadota</taxon>
        <taxon>Betaproteobacteria</taxon>
        <taxon>Burkholderiales</taxon>
        <taxon>Burkholderiaceae</taxon>
        <taxon>Burkholderia</taxon>
        <taxon>Burkholderia cepacia complex</taxon>
        <taxon>Burkholderia orbicola</taxon>
    </lineage>
</organism>
<name>RPOC_BURO0</name>
<comment type="function">
    <text evidence="1">DNA-dependent RNA polymerase catalyzes the transcription of DNA into RNA using the four ribonucleoside triphosphates as substrates.</text>
</comment>
<comment type="catalytic activity">
    <reaction evidence="1">
        <text>RNA(n) + a ribonucleoside 5'-triphosphate = RNA(n+1) + diphosphate</text>
        <dbReference type="Rhea" id="RHEA:21248"/>
        <dbReference type="Rhea" id="RHEA-COMP:14527"/>
        <dbReference type="Rhea" id="RHEA-COMP:17342"/>
        <dbReference type="ChEBI" id="CHEBI:33019"/>
        <dbReference type="ChEBI" id="CHEBI:61557"/>
        <dbReference type="ChEBI" id="CHEBI:140395"/>
        <dbReference type="EC" id="2.7.7.6"/>
    </reaction>
</comment>
<comment type="cofactor">
    <cofactor evidence="1">
        <name>Mg(2+)</name>
        <dbReference type="ChEBI" id="CHEBI:18420"/>
    </cofactor>
    <text evidence="1">Binds 1 Mg(2+) ion per subunit.</text>
</comment>
<comment type="cofactor">
    <cofactor evidence="1">
        <name>Zn(2+)</name>
        <dbReference type="ChEBI" id="CHEBI:29105"/>
    </cofactor>
    <text evidence="1">Binds 2 Zn(2+) ions per subunit.</text>
</comment>
<comment type="subunit">
    <text evidence="1">The RNAP catalytic core consists of 2 alpha, 1 beta, 1 beta' and 1 omega subunit. When a sigma factor is associated with the core the holoenzyme is formed, which can initiate transcription.</text>
</comment>
<comment type="similarity">
    <text evidence="1">Belongs to the RNA polymerase beta' chain family.</text>
</comment>
<proteinExistence type="inferred from homology"/>
<gene>
    <name evidence="1" type="primary">rpoC</name>
    <name type="ordered locus">Bcenmc03_0320</name>
</gene>
<sequence>MKALLDLFKQVQQEEVFDAIKIGLASPDKIRSWSFGEVKKPETINYRTFKPERDGLFCAKIFGPIKDYECLCGKYKRLKHRGVICEKCGVEVTLAKVRRERMGHIELASPVAHIWFLKSLPSRLGMVLDMTLRDIERVLYFEAYVVIEPGMTPLKARQIMTEEDYYNKVEEYGDEFRAEMGAEGVRELLRAINIDEQVETLRTELKNTGSEAKIKKYAKRLKVLEAFQRSGIKPEWMILEVLPVLPPELRPLVPLDGGRFATSDLNDLYRRVINRNNRLKRLLELKAPEIIVRNEKRMLQEAVDSLLDNGRRGKAMTGANKRPLKSLADMIKGKGGRFRQNLLGKRVDYSGRSVIVVGPTLKLHQCGLPKLMALELFKPFIFNKLEVMGVATTIKAAKKEVENQTPVVWDILEEVIREHPVMLNRAPTLHRLGIQAFEPVLIEGKAIQLHPLVCAAFNADFDGDQMAVHVPLSLEAQMEARTLMLASNNVLFPANGDPSIVPSQDIVLGLYYATREAVNGKGEGLSFTGVSEVIRAYENKEVELASRVNVRITEMVHNEDKSEGAPPFVPKITLYATTVGRAILSEILPHGLPFSVLNKPLKKKEISRLINTAFRKCGLRATVVFADQLMQSGFRLATRAGISICVDDMLVPPQKETIVGDAAKKVKEYDRQYMSGLVTAQERYNNVVDIWSATSEAVGKAMMEQLSTEPVTDRDGNETRQESFNSIYMMADSGARGSAVQIRQLAGMRGLMAKPDGSIIETPITANFREGLNVLQYFISTHGARKGLADTALKTANSGYLTRRLVDVTQDLVVVEDDCGTSNGVAMKALVEGGEVVEALRDRILGRVAVADVVNPETQETLYESGTLLDETAVEEIERLGIDEVRVRTPLTCETRYGLCAACYGRDLGRGSLVNVGEAVGVIAAQSIGEPGTQLTMRTFHIGGAASRAAVASSVEAKSNGIVRFTATMRYVTNAKGEQIVISRSGEAMITDDFGRERERHKVPYGATLLQLDGATIKAGTQLATWDPLTRPIITEYGGTVKFENVEEGVTVAKQIDDVTGLSTLVVIDVKRRGSQASKSVRPQVKLLDANGEEVKIPGTEHAVQIGFQVGALITVKDGQQVQVGEVLARIPTEAQKTRDITGGLPRVAELFEARSPKDAGILAEVTGTTSFGKDTKGKQRLVITDLEGNQHEFLIAKEKQVLVHDAQVVNKGEMIVDGPADPHDILRLQGIEALSRYIVDEVQDVYRLQGVKINDKHIEVIVRQMLRRVQITDNGDTRFIPGEQVERSDMLDENDRMIAEGKRPASYDNVLLGITKASLSTDSFISAASFQETTRVLTEAAIMGKRDDLRGLKENVIVGRLIPAGTGLAFHKARKAKESSDRERFDQIAAEEAFDFGTPSAPAEEPQHPAAE</sequence>
<protein>
    <recommendedName>
        <fullName evidence="1">DNA-directed RNA polymerase subunit beta'</fullName>
        <shortName evidence="1">RNAP subunit beta'</shortName>
        <ecNumber evidence="1">2.7.7.6</ecNumber>
    </recommendedName>
    <alternativeName>
        <fullName evidence="1">RNA polymerase subunit beta'</fullName>
    </alternativeName>
    <alternativeName>
        <fullName evidence="1">Transcriptase subunit beta'</fullName>
    </alternativeName>
</protein>
<feature type="chain" id="PRO_0000353307" description="DNA-directed RNA polymerase subunit beta'">
    <location>
        <begin position="1"/>
        <end position="1413"/>
    </location>
</feature>
<feature type="region of interest" description="Disordered" evidence="2">
    <location>
        <begin position="1392"/>
        <end position="1413"/>
    </location>
</feature>
<feature type="binding site" evidence="1">
    <location>
        <position position="70"/>
    </location>
    <ligand>
        <name>Zn(2+)</name>
        <dbReference type="ChEBI" id="CHEBI:29105"/>
        <label>1</label>
    </ligand>
</feature>
<feature type="binding site" evidence="1">
    <location>
        <position position="72"/>
    </location>
    <ligand>
        <name>Zn(2+)</name>
        <dbReference type="ChEBI" id="CHEBI:29105"/>
        <label>1</label>
    </ligand>
</feature>
<feature type="binding site" evidence="1">
    <location>
        <position position="85"/>
    </location>
    <ligand>
        <name>Zn(2+)</name>
        <dbReference type="ChEBI" id="CHEBI:29105"/>
        <label>1</label>
    </ligand>
</feature>
<feature type="binding site" evidence="1">
    <location>
        <position position="88"/>
    </location>
    <ligand>
        <name>Zn(2+)</name>
        <dbReference type="ChEBI" id="CHEBI:29105"/>
        <label>1</label>
    </ligand>
</feature>
<feature type="binding site" evidence="1">
    <location>
        <position position="460"/>
    </location>
    <ligand>
        <name>Mg(2+)</name>
        <dbReference type="ChEBI" id="CHEBI:18420"/>
    </ligand>
</feature>
<feature type="binding site" evidence="1">
    <location>
        <position position="462"/>
    </location>
    <ligand>
        <name>Mg(2+)</name>
        <dbReference type="ChEBI" id="CHEBI:18420"/>
    </ligand>
</feature>
<feature type="binding site" evidence="1">
    <location>
        <position position="464"/>
    </location>
    <ligand>
        <name>Mg(2+)</name>
        <dbReference type="ChEBI" id="CHEBI:18420"/>
    </ligand>
</feature>
<feature type="binding site" evidence="1">
    <location>
        <position position="819"/>
    </location>
    <ligand>
        <name>Zn(2+)</name>
        <dbReference type="ChEBI" id="CHEBI:29105"/>
        <label>2</label>
    </ligand>
</feature>
<feature type="binding site" evidence="1">
    <location>
        <position position="893"/>
    </location>
    <ligand>
        <name>Zn(2+)</name>
        <dbReference type="ChEBI" id="CHEBI:29105"/>
        <label>2</label>
    </ligand>
</feature>
<feature type="binding site" evidence="1">
    <location>
        <position position="900"/>
    </location>
    <ligand>
        <name>Zn(2+)</name>
        <dbReference type="ChEBI" id="CHEBI:29105"/>
        <label>2</label>
    </ligand>
</feature>
<feature type="binding site" evidence="1">
    <location>
        <position position="903"/>
    </location>
    <ligand>
        <name>Zn(2+)</name>
        <dbReference type="ChEBI" id="CHEBI:29105"/>
        <label>2</label>
    </ligand>
</feature>
<dbReference type="EC" id="2.7.7.6" evidence="1"/>
<dbReference type="EMBL" id="CP000958">
    <property type="protein sequence ID" value="ACA89500.1"/>
    <property type="molecule type" value="Genomic_DNA"/>
</dbReference>
<dbReference type="RefSeq" id="WP_011546645.1">
    <property type="nucleotide sequence ID" value="NC_010508.1"/>
</dbReference>
<dbReference type="SMR" id="B1JU15"/>
<dbReference type="GeneID" id="83047124"/>
<dbReference type="KEGG" id="bcm:Bcenmc03_0320"/>
<dbReference type="HOGENOM" id="CLU_000524_3_1_4"/>
<dbReference type="Proteomes" id="UP000002169">
    <property type="component" value="Chromosome 1"/>
</dbReference>
<dbReference type="GO" id="GO:0000428">
    <property type="term" value="C:DNA-directed RNA polymerase complex"/>
    <property type="evidence" value="ECO:0007669"/>
    <property type="project" value="UniProtKB-KW"/>
</dbReference>
<dbReference type="GO" id="GO:0003677">
    <property type="term" value="F:DNA binding"/>
    <property type="evidence" value="ECO:0007669"/>
    <property type="project" value="UniProtKB-UniRule"/>
</dbReference>
<dbReference type="GO" id="GO:0003899">
    <property type="term" value="F:DNA-directed RNA polymerase activity"/>
    <property type="evidence" value="ECO:0007669"/>
    <property type="project" value="UniProtKB-UniRule"/>
</dbReference>
<dbReference type="GO" id="GO:0000287">
    <property type="term" value="F:magnesium ion binding"/>
    <property type="evidence" value="ECO:0007669"/>
    <property type="project" value="UniProtKB-UniRule"/>
</dbReference>
<dbReference type="GO" id="GO:0008270">
    <property type="term" value="F:zinc ion binding"/>
    <property type="evidence" value="ECO:0007669"/>
    <property type="project" value="UniProtKB-UniRule"/>
</dbReference>
<dbReference type="GO" id="GO:0006351">
    <property type="term" value="P:DNA-templated transcription"/>
    <property type="evidence" value="ECO:0007669"/>
    <property type="project" value="UniProtKB-UniRule"/>
</dbReference>
<dbReference type="CDD" id="cd02655">
    <property type="entry name" value="RNAP_beta'_C"/>
    <property type="match status" value="1"/>
</dbReference>
<dbReference type="CDD" id="cd01609">
    <property type="entry name" value="RNAP_beta'_N"/>
    <property type="match status" value="1"/>
</dbReference>
<dbReference type="FunFam" id="1.10.132.30:FF:000003">
    <property type="entry name" value="DNA-directed RNA polymerase subunit beta"/>
    <property type="match status" value="1"/>
</dbReference>
<dbReference type="FunFam" id="1.10.150.390:FF:000002">
    <property type="entry name" value="DNA-directed RNA polymerase subunit beta"/>
    <property type="match status" value="1"/>
</dbReference>
<dbReference type="FunFam" id="4.10.860.120:FF:000001">
    <property type="entry name" value="DNA-directed RNA polymerase subunit beta"/>
    <property type="match status" value="1"/>
</dbReference>
<dbReference type="Gene3D" id="1.10.132.30">
    <property type="match status" value="1"/>
</dbReference>
<dbReference type="Gene3D" id="1.10.150.390">
    <property type="match status" value="1"/>
</dbReference>
<dbReference type="Gene3D" id="1.10.1790.20">
    <property type="match status" value="1"/>
</dbReference>
<dbReference type="Gene3D" id="1.10.40.90">
    <property type="match status" value="1"/>
</dbReference>
<dbReference type="Gene3D" id="2.40.40.20">
    <property type="match status" value="1"/>
</dbReference>
<dbReference type="Gene3D" id="2.40.50.100">
    <property type="match status" value="3"/>
</dbReference>
<dbReference type="Gene3D" id="4.10.860.120">
    <property type="entry name" value="RNA polymerase II, clamp domain"/>
    <property type="match status" value="1"/>
</dbReference>
<dbReference type="Gene3D" id="1.10.274.100">
    <property type="entry name" value="RNA polymerase Rpb1, domain 3"/>
    <property type="match status" value="1"/>
</dbReference>
<dbReference type="HAMAP" id="MF_01322">
    <property type="entry name" value="RNApol_bact_RpoC"/>
    <property type="match status" value="1"/>
</dbReference>
<dbReference type="InterPro" id="IPR045867">
    <property type="entry name" value="DNA-dir_RpoC_beta_prime"/>
</dbReference>
<dbReference type="InterPro" id="IPR012754">
    <property type="entry name" value="DNA-dir_RpoC_beta_prime_bact"/>
</dbReference>
<dbReference type="InterPro" id="IPR000722">
    <property type="entry name" value="RNA_pol_asu"/>
</dbReference>
<dbReference type="InterPro" id="IPR006592">
    <property type="entry name" value="RNA_pol_N"/>
</dbReference>
<dbReference type="InterPro" id="IPR007080">
    <property type="entry name" value="RNA_pol_Rpb1_1"/>
</dbReference>
<dbReference type="InterPro" id="IPR007066">
    <property type="entry name" value="RNA_pol_Rpb1_3"/>
</dbReference>
<dbReference type="InterPro" id="IPR042102">
    <property type="entry name" value="RNA_pol_Rpb1_3_sf"/>
</dbReference>
<dbReference type="InterPro" id="IPR007083">
    <property type="entry name" value="RNA_pol_Rpb1_4"/>
</dbReference>
<dbReference type="InterPro" id="IPR007081">
    <property type="entry name" value="RNA_pol_Rpb1_5"/>
</dbReference>
<dbReference type="InterPro" id="IPR044893">
    <property type="entry name" value="RNA_pol_Rpb1_clamp_domain"/>
</dbReference>
<dbReference type="InterPro" id="IPR038120">
    <property type="entry name" value="Rpb1_funnel_sf"/>
</dbReference>
<dbReference type="NCBIfam" id="TIGR02386">
    <property type="entry name" value="rpoC_TIGR"/>
    <property type="match status" value="1"/>
</dbReference>
<dbReference type="PANTHER" id="PTHR19376">
    <property type="entry name" value="DNA-DIRECTED RNA POLYMERASE"/>
    <property type="match status" value="1"/>
</dbReference>
<dbReference type="PANTHER" id="PTHR19376:SF54">
    <property type="entry name" value="DNA-DIRECTED RNA POLYMERASE SUBUNIT BETA"/>
    <property type="match status" value="1"/>
</dbReference>
<dbReference type="Pfam" id="PF04997">
    <property type="entry name" value="RNA_pol_Rpb1_1"/>
    <property type="match status" value="1"/>
</dbReference>
<dbReference type="Pfam" id="PF00623">
    <property type="entry name" value="RNA_pol_Rpb1_2"/>
    <property type="match status" value="2"/>
</dbReference>
<dbReference type="Pfam" id="PF04983">
    <property type="entry name" value="RNA_pol_Rpb1_3"/>
    <property type="match status" value="1"/>
</dbReference>
<dbReference type="Pfam" id="PF05000">
    <property type="entry name" value="RNA_pol_Rpb1_4"/>
    <property type="match status" value="1"/>
</dbReference>
<dbReference type="Pfam" id="PF04998">
    <property type="entry name" value="RNA_pol_Rpb1_5"/>
    <property type="match status" value="1"/>
</dbReference>
<dbReference type="SMART" id="SM00663">
    <property type="entry name" value="RPOLA_N"/>
    <property type="match status" value="1"/>
</dbReference>
<dbReference type="SUPFAM" id="SSF64484">
    <property type="entry name" value="beta and beta-prime subunits of DNA dependent RNA-polymerase"/>
    <property type="match status" value="1"/>
</dbReference>
<accession>B1JU15</accession>
<reference key="1">
    <citation type="submission" date="2008-02" db="EMBL/GenBank/DDBJ databases">
        <title>Complete sequence of chromosome 1 of Burkholderia cenocepacia MC0-3.</title>
        <authorList>
            <person name="Copeland A."/>
            <person name="Lucas S."/>
            <person name="Lapidus A."/>
            <person name="Barry K."/>
            <person name="Bruce D."/>
            <person name="Goodwin L."/>
            <person name="Glavina del Rio T."/>
            <person name="Dalin E."/>
            <person name="Tice H."/>
            <person name="Pitluck S."/>
            <person name="Chain P."/>
            <person name="Malfatti S."/>
            <person name="Shin M."/>
            <person name="Vergez L."/>
            <person name="Schmutz J."/>
            <person name="Larimer F."/>
            <person name="Land M."/>
            <person name="Hauser L."/>
            <person name="Kyrpides N."/>
            <person name="Mikhailova N."/>
            <person name="Tiedje J."/>
            <person name="Richardson P."/>
        </authorList>
    </citation>
    <scope>NUCLEOTIDE SEQUENCE [LARGE SCALE GENOMIC DNA]</scope>
    <source>
        <strain>MC0-3</strain>
    </source>
</reference>
<keyword id="KW-0240">DNA-directed RNA polymerase</keyword>
<keyword id="KW-0460">Magnesium</keyword>
<keyword id="KW-0479">Metal-binding</keyword>
<keyword id="KW-0548">Nucleotidyltransferase</keyword>
<keyword id="KW-0804">Transcription</keyword>
<keyword id="KW-0808">Transferase</keyword>
<keyword id="KW-0862">Zinc</keyword>
<evidence type="ECO:0000255" key="1">
    <source>
        <dbReference type="HAMAP-Rule" id="MF_01322"/>
    </source>
</evidence>
<evidence type="ECO:0000256" key="2">
    <source>
        <dbReference type="SAM" id="MobiDB-lite"/>
    </source>
</evidence>